<feature type="chain" id="PRO_0000214508" description="Probable Fe(2+)-trafficking protein">
    <location>
        <begin position="1"/>
        <end position="90"/>
    </location>
</feature>
<evidence type="ECO:0000255" key="1">
    <source>
        <dbReference type="HAMAP-Rule" id="MF_00686"/>
    </source>
</evidence>
<dbReference type="EMBL" id="AE003852">
    <property type="protein sequence ID" value="AAF93624.1"/>
    <property type="molecule type" value="Genomic_DNA"/>
</dbReference>
<dbReference type="PIR" id="C82320">
    <property type="entry name" value="C82320"/>
</dbReference>
<dbReference type="RefSeq" id="NP_230105.1">
    <property type="nucleotide sequence ID" value="NC_002505.1"/>
</dbReference>
<dbReference type="RefSeq" id="WP_000124738.1">
    <property type="nucleotide sequence ID" value="NZ_LT906614.1"/>
</dbReference>
<dbReference type="SMR" id="Q9KUR4"/>
<dbReference type="STRING" id="243277.VC_0451"/>
<dbReference type="DNASU" id="2615113"/>
<dbReference type="EnsemblBacteria" id="AAF93624">
    <property type="protein sequence ID" value="AAF93624"/>
    <property type="gene ID" value="VC_0451"/>
</dbReference>
<dbReference type="KEGG" id="vch:VC_0451"/>
<dbReference type="PATRIC" id="fig|243277.26.peg.424"/>
<dbReference type="eggNOG" id="COG2924">
    <property type="taxonomic scope" value="Bacteria"/>
</dbReference>
<dbReference type="HOGENOM" id="CLU_170994_0_0_6"/>
<dbReference type="Proteomes" id="UP000000584">
    <property type="component" value="Chromosome 1"/>
</dbReference>
<dbReference type="GO" id="GO:0005829">
    <property type="term" value="C:cytosol"/>
    <property type="evidence" value="ECO:0000318"/>
    <property type="project" value="GO_Central"/>
</dbReference>
<dbReference type="GO" id="GO:0005506">
    <property type="term" value="F:iron ion binding"/>
    <property type="evidence" value="ECO:0007669"/>
    <property type="project" value="UniProtKB-UniRule"/>
</dbReference>
<dbReference type="GO" id="GO:0034599">
    <property type="term" value="P:cellular response to oxidative stress"/>
    <property type="evidence" value="ECO:0000318"/>
    <property type="project" value="GO_Central"/>
</dbReference>
<dbReference type="FunFam" id="1.10.3880.10:FF:000001">
    <property type="entry name" value="Probable Fe(2+)-trafficking protein"/>
    <property type="match status" value="1"/>
</dbReference>
<dbReference type="Gene3D" id="1.10.3880.10">
    <property type="entry name" value="Fe(II) trafficking protein YggX"/>
    <property type="match status" value="1"/>
</dbReference>
<dbReference type="HAMAP" id="MF_00686">
    <property type="entry name" value="Fe_traffic_YggX"/>
    <property type="match status" value="1"/>
</dbReference>
<dbReference type="InterPro" id="IPR007457">
    <property type="entry name" value="Fe_traffick_prot_YggX"/>
</dbReference>
<dbReference type="InterPro" id="IPR036766">
    <property type="entry name" value="Fe_traffick_prot_YggX_sf"/>
</dbReference>
<dbReference type="NCBIfam" id="NF003817">
    <property type="entry name" value="PRK05408.1"/>
    <property type="match status" value="1"/>
</dbReference>
<dbReference type="PANTHER" id="PTHR36965">
    <property type="entry name" value="FE(2+)-TRAFFICKING PROTEIN-RELATED"/>
    <property type="match status" value="1"/>
</dbReference>
<dbReference type="PANTHER" id="PTHR36965:SF1">
    <property type="entry name" value="FE(2+)-TRAFFICKING PROTEIN-RELATED"/>
    <property type="match status" value="1"/>
</dbReference>
<dbReference type="Pfam" id="PF04362">
    <property type="entry name" value="Iron_traffic"/>
    <property type="match status" value="1"/>
</dbReference>
<dbReference type="PIRSF" id="PIRSF029827">
    <property type="entry name" value="Fe_traffic_YggX"/>
    <property type="match status" value="1"/>
</dbReference>
<dbReference type="SUPFAM" id="SSF111148">
    <property type="entry name" value="YggX-like"/>
    <property type="match status" value="1"/>
</dbReference>
<name>FETP_VIBCH</name>
<sequence>MARTVFCTRLQKEADGLDFQLYPGELGKRIFDNICKEAWAQWQTKQTMLINEKKLNMMDPEHRKLLEQEMVNFLFEGKEVHIEGYTPPAK</sequence>
<reference key="1">
    <citation type="journal article" date="2000" name="Nature">
        <title>DNA sequence of both chromosomes of the cholera pathogen Vibrio cholerae.</title>
        <authorList>
            <person name="Heidelberg J.F."/>
            <person name="Eisen J.A."/>
            <person name="Nelson W.C."/>
            <person name="Clayton R.A."/>
            <person name="Gwinn M.L."/>
            <person name="Dodson R.J."/>
            <person name="Haft D.H."/>
            <person name="Hickey E.K."/>
            <person name="Peterson J.D."/>
            <person name="Umayam L.A."/>
            <person name="Gill S.R."/>
            <person name="Nelson K.E."/>
            <person name="Read T.D."/>
            <person name="Tettelin H."/>
            <person name="Richardson D.L."/>
            <person name="Ermolaeva M.D."/>
            <person name="Vamathevan J.J."/>
            <person name="Bass S."/>
            <person name="Qin H."/>
            <person name="Dragoi I."/>
            <person name="Sellers P."/>
            <person name="McDonald L.A."/>
            <person name="Utterback T.R."/>
            <person name="Fleischmann R.D."/>
            <person name="Nierman W.C."/>
            <person name="White O."/>
            <person name="Salzberg S.L."/>
            <person name="Smith H.O."/>
            <person name="Colwell R.R."/>
            <person name="Mekalanos J.J."/>
            <person name="Venter J.C."/>
            <person name="Fraser C.M."/>
        </authorList>
    </citation>
    <scope>NUCLEOTIDE SEQUENCE [LARGE SCALE GENOMIC DNA]</scope>
    <source>
        <strain>ATCC 39315 / El Tor Inaba N16961</strain>
    </source>
</reference>
<proteinExistence type="inferred from homology"/>
<accession>Q9KUR4</accession>
<protein>
    <recommendedName>
        <fullName evidence="1">Probable Fe(2+)-trafficking protein</fullName>
    </recommendedName>
</protein>
<gene>
    <name type="ordered locus">VC_0451</name>
</gene>
<organism>
    <name type="scientific">Vibrio cholerae serotype O1 (strain ATCC 39315 / El Tor Inaba N16961)</name>
    <dbReference type="NCBI Taxonomy" id="243277"/>
    <lineage>
        <taxon>Bacteria</taxon>
        <taxon>Pseudomonadati</taxon>
        <taxon>Pseudomonadota</taxon>
        <taxon>Gammaproteobacteria</taxon>
        <taxon>Vibrionales</taxon>
        <taxon>Vibrionaceae</taxon>
        <taxon>Vibrio</taxon>
    </lineage>
</organism>
<keyword id="KW-0408">Iron</keyword>
<keyword id="KW-1185">Reference proteome</keyword>
<comment type="function">
    <text evidence="1">Could be a mediator in iron transactions between iron acquisition and iron-requiring processes, such as synthesis and/or repair of Fe-S clusters in biosynthetic enzymes.</text>
</comment>
<comment type="similarity">
    <text evidence="1">Belongs to the Fe(2+)-trafficking protein family.</text>
</comment>